<evidence type="ECO:0000250" key="1"/>
<evidence type="ECO:0000250" key="2">
    <source>
        <dbReference type="UniProtKB" id="Q80WT5"/>
    </source>
</evidence>
<evidence type="ECO:0000255" key="3"/>
<evidence type="ECO:0000256" key="4">
    <source>
        <dbReference type="SAM" id="MobiDB-lite"/>
    </source>
</evidence>
<evidence type="ECO:0000269" key="5">
    <source>
    </source>
</evidence>
<evidence type="ECO:0000269" key="6">
    <source>
    </source>
</evidence>
<evidence type="ECO:0000303" key="7">
    <source>
    </source>
</evidence>
<evidence type="ECO:0000303" key="8">
    <source>
    </source>
</evidence>
<evidence type="ECO:0000303" key="9">
    <source>
    </source>
</evidence>
<evidence type="ECO:0000305" key="10"/>
<evidence type="ECO:0007744" key="11">
    <source>
    </source>
</evidence>
<evidence type="ECO:0007744" key="12">
    <source>
    </source>
</evidence>
<evidence type="ECO:0007744" key="13">
    <source>
    </source>
</evidence>
<evidence type="ECO:0007744" key="14">
    <source>
    </source>
</evidence>
<evidence type="ECO:0007744" key="15">
    <source>
    </source>
</evidence>
<keyword id="KW-0025">Alternative splicing</keyword>
<keyword id="KW-0963">Cytoplasm</keyword>
<keyword id="KW-0968">Cytoplasmic vesicle</keyword>
<keyword id="KW-0597">Phosphoprotein</keyword>
<keyword id="KW-0653">Protein transport</keyword>
<keyword id="KW-1267">Proteomics identification</keyword>
<keyword id="KW-1185">Reference proteome</keyword>
<keyword id="KW-0677">Repeat</keyword>
<keyword id="KW-0813">Transport</keyword>
<gene>
    <name type="primary">AFTPH</name>
    <name type="synonym">AFTH</name>
</gene>
<name>AFTIN_HUMAN</name>
<organism>
    <name type="scientific">Homo sapiens</name>
    <name type="common">Human</name>
    <dbReference type="NCBI Taxonomy" id="9606"/>
    <lineage>
        <taxon>Eukaryota</taxon>
        <taxon>Metazoa</taxon>
        <taxon>Chordata</taxon>
        <taxon>Craniata</taxon>
        <taxon>Vertebrata</taxon>
        <taxon>Euteleostomi</taxon>
        <taxon>Mammalia</taxon>
        <taxon>Eutheria</taxon>
        <taxon>Euarchontoglires</taxon>
        <taxon>Primates</taxon>
        <taxon>Haplorrhini</taxon>
        <taxon>Catarrhini</taxon>
        <taxon>Hominidae</taxon>
        <taxon>Homo</taxon>
    </lineage>
</organism>
<accession>Q6ULP2</accession>
<accession>D6W5E9</accession>
<accession>Q6ZM66</accession>
<accession>Q86VW3</accession>
<accession>Q8TCF3</accession>
<accession>Q9H7E3</accession>
<accession>Q9HAB9</accession>
<accession>Q9NXS4</accession>
<sequence>MEPDIIRMYSSSPPPLDNGAEDDDDDEFGEFGGFSEVSPSGVGFVDFDTPDYTRPKEEFVPSNHFMPIHEFSENVDSLTSFKSIKNGNDKDITAELSAPVKGQSDVLLSTTSKEIISSEMLATSIDGMERPGNLNKVVEQRQNVGTLESFSPGDFRTNMNVVHQNKQLESCNGEKPPCLEILTNGFAVLETVNPQGTDDLDNVADSKGRKPLSTHSTEYNLDSVPSPAEEFADFATFSKKERIQLEEIECAVLNDREALTIRENNKINRVNELNSVKEVALGRSLDNKGDTDGEDQVCVSEISIVTNRGFSVEKQGLPTLQQDEFLQSGVQSKAWSLVDSADNSEAIRREQCKTEEKLDLLTSKCAHLCMDSVKTSDDEVGSPKEESRKFTNFQSPNIDPTEENDLDDSLSVKNGDSSNDFVTCNDINEDDFGDFGDFGSASGSTPPFVTGTQDSMSDATFEESSEHFPHFSEPGDDFGEFGDINAVSCQEETILTKSDLKQTSDNLSEECQLARKSSGTGTEPVAKLKNGQEGEIGHFDSVPNIQDDCNGFQDSDDFADFSSAGPSQVVDWNAFEDEQKDSCSWAAFGDQQATESHHRKEAWQSHRTDENIDTPGTPKTHSVPSATSKGAVASGHLQESATSVQTALLNRLERIFEACFPSILVPDAEEEVTSLKHLLETSTLPIKTREALPESGELLDVWTELQDIHDAHGLRYQWGGSHSNKKLLSSLGIDTRNILFTGNKKQPVIVPMYAAGLGMLEPTKEPLKPLSAAEKIASIGQTATMSPDMNTCTSDQFQESLPPVQFDWSSSGLTNPLDASGGSTLLNLDFFGPVDDSSSSSSTTIPGVDPELYELTTSKLEISTSSLKVTDAFARLMSTVEKTSTSTRKPKREEHLSEEAIKVIAGLPDLTFMHAKVLMFPATLTPSTSSQEKADG</sequence>
<dbReference type="EMBL" id="AY367088">
    <property type="protein sequence ID" value="AAR14726.1"/>
    <property type="molecule type" value="mRNA"/>
</dbReference>
<dbReference type="EMBL" id="AK000087">
    <property type="protein sequence ID" value="BAA90936.1"/>
    <property type="molecule type" value="mRNA"/>
</dbReference>
<dbReference type="EMBL" id="AK021899">
    <property type="protein sequence ID" value="BAB13930.1"/>
    <property type="status" value="ALT_INIT"/>
    <property type="molecule type" value="mRNA"/>
</dbReference>
<dbReference type="EMBL" id="AK024658">
    <property type="protein sequence ID" value="BAB14949.1"/>
    <property type="status" value="ALT_INIT"/>
    <property type="molecule type" value="mRNA"/>
</dbReference>
<dbReference type="EMBL" id="AL833962">
    <property type="protein sequence ID" value="CAE46209.1"/>
    <property type="molecule type" value="mRNA"/>
</dbReference>
<dbReference type="EMBL" id="CH471053">
    <property type="protein sequence ID" value="EAW99938.1"/>
    <property type="molecule type" value="Genomic_DNA"/>
</dbReference>
<dbReference type="EMBL" id="CH471053">
    <property type="protein sequence ID" value="EAW99941.1"/>
    <property type="molecule type" value="Genomic_DNA"/>
</dbReference>
<dbReference type="EMBL" id="BC022247">
    <property type="protein sequence ID" value="AAH22247.1"/>
    <property type="status" value="ALT_SEQ"/>
    <property type="molecule type" value="mRNA"/>
</dbReference>
<dbReference type="EMBL" id="BC047529">
    <property type="protein sequence ID" value="AAH47529.1"/>
    <property type="molecule type" value="mRNA"/>
</dbReference>
<dbReference type="CCDS" id="CCDS1878.1">
    <molecule id="Q6ULP2-6"/>
</dbReference>
<dbReference type="CCDS" id="CCDS46303.1">
    <molecule id="Q6ULP2-1"/>
</dbReference>
<dbReference type="CCDS" id="CCDS92769.1">
    <molecule id="Q6ULP2-9"/>
</dbReference>
<dbReference type="RefSeq" id="NP_001002243.1">
    <molecule id="Q6ULP2-8"/>
    <property type="nucleotide sequence ID" value="NM_001002243.3"/>
</dbReference>
<dbReference type="RefSeq" id="NP_001362900.1">
    <molecule id="Q6ULP2-9"/>
    <property type="nucleotide sequence ID" value="NM_001375971.1"/>
</dbReference>
<dbReference type="RefSeq" id="NP_060127.3">
    <molecule id="Q6ULP2-6"/>
    <property type="nucleotide sequence ID" value="NM_017657.4"/>
</dbReference>
<dbReference type="RefSeq" id="NP_982261.2">
    <molecule id="Q6ULP2-1"/>
    <property type="nucleotide sequence ID" value="NM_203437.3"/>
</dbReference>
<dbReference type="RefSeq" id="XP_005264437.1">
    <property type="nucleotide sequence ID" value="XM_005264380.1"/>
</dbReference>
<dbReference type="BioGRID" id="120169">
    <property type="interactions" value="55"/>
</dbReference>
<dbReference type="ELM" id="Q6ULP2"/>
<dbReference type="FunCoup" id="Q6ULP2">
    <property type="interactions" value="2004"/>
</dbReference>
<dbReference type="IntAct" id="Q6ULP2">
    <property type="interactions" value="33"/>
</dbReference>
<dbReference type="MINT" id="Q6ULP2"/>
<dbReference type="STRING" id="9606.ENSP00000238855"/>
<dbReference type="GlyCosmos" id="Q6ULP2">
    <property type="glycosylation" value="2 sites, 1 glycan"/>
</dbReference>
<dbReference type="GlyGen" id="Q6ULP2">
    <property type="glycosylation" value="2 sites, 1 O-linked glycan (2 sites)"/>
</dbReference>
<dbReference type="iPTMnet" id="Q6ULP2"/>
<dbReference type="PhosphoSitePlus" id="Q6ULP2"/>
<dbReference type="BioMuta" id="AFTPH"/>
<dbReference type="DMDM" id="62286617"/>
<dbReference type="jPOST" id="Q6ULP2"/>
<dbReference type="MassIVE" id="Q6ULP2"/>
<dbReference type="PaxDb" id="9606-ENSP00000238855"/>
<dbReference type="PeptideAtlas" id="Q6ULP2"/>
<dbReference type="ProteomicsDB" id="67412">
    <molecule id="Q6ULP2-1"/>
</dbReference>
<dbReference type="Pumba" id="Q6ULP2"/>
<dbReference type="Antibodypedia" id="30831">
    <property type="antibodies" value="105 antibodies from 21 providers"/>
</dbReference>
<dbReference type="DNASU" id="54812"/>
<dbReference type="Ensembl" id="ENST00000238856.8">
    <molecule id="Q6ULP2-6"/>
    <property type="protein sequence ID" value="ENSP00000238856.4"/>
    <property type="gene ID" value="ENSG00000119844.17"/>
</dbReference>
<dbReference type="Ensembl" id="ENST00000409933.6">
    <molecule id="Q6ULP2-1"/>
    <property type="protein sequence ID" value="ENSP00000387071.1"/>
    <property type="gene ID" value="ENSG00000119844.17"/>
</dbReference>
<dbReference type="Ensembl" id="ENST00000695864.1">
    <molecule id="Q6ULP2-9"/>
    <property type="protein sequence ID" value="ENSP00000512229.1"/>
    <property type="gene ID" value="ENSG00000119844.17"/>
</dbReference>
<dbReference type="GeneID" id="54812"/>
<dbReference type="KEGG" id="hsa:54812"/>
<dbReference type="MANE-Select" id="ENST00000409933.6">
    <property type="protein sequence ID" value="ENSP00000387071.1"/>
    <property type="RefSeq nucleotide sequence ID" value="NM_203437.4"/>
    <property type="RefSeq protein sequence ID" value="NP_982261.2"/>
</dbReference>
<dbReference type="UCSC" id="uc002scz.4">
    <molecule id="Q6ULP2-1"/>
    <property type="organism name" value="human"/>
</dbReference>
<dbReference type="AGR" id="HGNC:25951"/>
<dbReference type="CTD" id="54812"/>
<dbReference type="DisGeNET" id="54812"/>
<dbReference type="GeneCards" id="AFTPH"/>
<dbReference type="HGNC" id="HGNC:25951">
    <property type="gene designation" value="AFTPH"/>
</dbReference>
<dbReference type="HPA" id="ENSG00000119844">
    <property type="expression patterns" value="Low tissue specificity"/>
</dbReference>
<dbReference type="MIM" id="619628">
    <property type="type" value="gene"/>
</dbReference>
<dbReference type="neXtProt" id="NX_Q6ULP2"/>
<dbReference type="OpenTargets" id="ENSG00000119844"/>
<dbReference type="PharmGKB" id="PA145149871"/>
<dbReference type="VEuPathDB" id="HostDB:ENSG00000119844"/>
<dbReference type="eggNOG" id="ENOG502QPXF">
    <property type="taxonomic scope" value="Eukaryota"/>
</dbReference>
<dbReference type="GeneTree" id="ENSGT00940000154186"/>
<dbReference type="HOGENOM" id="CLU_017041_0_0_1"/>
<dbReference type="InParanoid" id="Q6ULP2"/>
<dbReference type="OMA" id="FRTDMNI"/>
<dbReference type="OrthoDB" id="5917212at2759"/>
<dbReference type="PAN-GO" id="Q6ULP2">
    <property type="GO annotations" value="4 GO annotations based on evolutionary models"/>
</dbReference>
<dbReference type="PhylomeDB" id="Q6ULP2"/>
<dbReference type="TreeFam" id="TF331532"/>
<dbReference type="PathwayCommons" id="Q6ULP2"/>
<dbReference type="SignaLink" id="Q6ULP2"/>
<dbReference type="BioGRID-ORCS" id="54812">
    <property type="hits" value="14 hits in 1155 CRISPR screens"/>
</dbReference>
<dbReference type="ChiTaRS" id="AFTPH">
    <property type="organism name" value="human"/>
</dbReference>
<dbReference type="GeneWiki" id="AFTPH"/>
<dbReference type="GenomeRNAi" id="54812"/>
<dbReference type="Pharos" id="Q6ULP2">
    <property type="development level" value="Tbio"/>
</dbReference>
<dbReference type="PRO" id="PR:Q6ULP2"/>
<dbReference type="Proteomes" id="UP000005640">
    <property type="component" value="Chromosome 2"/>
</dbReference>
<dbReference type="RNAct" id="Q6ULP2">
    <property type="molecule type" value="protein"/>
</dbReference>
<dbReference type="Bgee" id="ENSG00000119844">
    <property type="expression patterns" value="Expressed in renal medulla and 209 other cell types or tissues"/>
</dbReference>
<dbReference type="ExpressionAtlas" id="Q6ULP2">
    <property type="expression patterns" value="baseline and differential"/>
</dbReference>
<dbReference type="GO" id="GO:0030121">
    <property type="term" value="C:AP-1 adaptor complex"/>
    <property type="evidence" value="ECO:0000314"/>
    <property type="project" value="UniProtKB"/>
</dbReference>
<dbReference type="GO" id="GO:0005829">
    <property type="term" value="C:cytosol"/>
    <property type="evidence" value="ECO:0000314"/>
    <property type="project" value="HPA"/>
</dbReference>
<dbReference type="GO" id="GO:0005794">
    <property type="term" value="C:Golgi apparatus"/>
    <property type="evidence" value="ECO:0000314"/>
    <property type="project" value="HPA"/>
</dbReference>
<dbReference type="GO" id="GO:0043231">
    <property type="term" value="C:intracellular membrane-bounded organelle"/>
    <property type="evidence" value="ECO:0000314"/>
    <property type="project" value="HPA"/>
</dbReference>
<dbReference type="GO" id="GO:0005654">
    <property type="term" value="C:nucleoplasm"/>
    <property type="evidence" value="ECO:0000314"/>
    <property type="project" value="HPA"/>
</dbReference>
<dbReference type="GO" id="GO:0048471">
    <property type="term" value="C:perinuclear region of cytoplasm"/>
    <property type="evidence" value="ECO:0007669"/>
    <property type="project" value="UniProtKB-SubCell"/>
</dbReference>
<dbReference type="GO" id="GO:0032588">
    <property type="term" value="C:trans-Golgi network membrane"/>
    <property type="evidence" value="ECO:0000318"/>
    <property type="project" value="GO_Central"/>
</dbReference>
<dbReference type="GO" id="GO:0030276">
    <property type="term" value="F:clathrin binding"/>
    <property type="evidence" value="ECO:0000314"/>
    <property type="project" value="UniProtKB"/>
</dbReference>
<dbReference type="GO" id="GO:0046907">
    <property type="term" value="P:intracellular transport"/>
    <property type="evidence" value="ECO:0000318"/>
    <property type="project" value="GO_Central"/>
</dbReference>
<dbReference type="GO" id="GO:0015031">
    <property type="term" value="P:protein transport"/>
    <property type="evidence" value="ECO:0007669"/>
    <property type="project" value="UniProtKB-KW"/>
</dbReference>
<dbReference type="InterPro" id="IPR046359">
    <property type="entry name" value="Aftin-like"/>
</dbReference>
<dbReference type="InterPro" id="IPR029205">
    <property type="entry name" value="Clathrin-bd"/>
</dbReference>
<dbReference type="PANTHER" id="PTHR16156:SF9">
    <property type="entry name" value="AFTIPHILIN"/>
    <property type="match status" value="1"/>
</dbReference>
<dbReference type="PANTHER" id="PTHR16156">
    <property type="entry name" value="AFTIPHILIN A-RELATED"/>
    <property type="match status" value="1"/>
</dbReference>
<dbReference type="Pfam" id="PF15045">
    <property type="entry name" value="Clathrin_bdg"/>
    <property type="match status" value="1"/>
</dbReference>
<reference key="1">
    <citation type="journal article" date="2004" name="J. Biol. Chem.">
        <title>Definition of the consensus motif recognized by gamma-adaptin ear domains.</title>
        <authorList>
            <person name="Mattera R."/>
            <person name="Ritter B."/>
            <person name="Sidhu S.S."/>
            <person name="McPherson P.S."/>
            <person name="Bonifacino J.S."/>
        </authorList>
    </citation>
    <scope>NUCLEOTIDE SEQUENCE [MRNA] (ISOFORM 1)</scope>
    <scope>SUBCELLULAR LOCATION</scope>
    <scope>INTERACTION WITH GGA1; GGA3; AP1G1 AND AP1G2</scope>
    <source>
        <tissue>Brain</tissue>
    </source>
</reference>
<reference key="2">
    <citation type="journal article" date="2004" name="Nat. Genet.">
        <title>Complete sequencing and characterization of 21,243 full-length human cDNAs.</title>
        <authorList>
            <person name="Ota T."/>
            <person name="Suzuki Y."/>
            <person name="Nishikawa T."/>
            <person name="Otsuki T."/>
            <person name="Sugiyama T."/>
            <person name="Irie R."/>
            <person name="Wakamatsu A."/>
            <person name="Hayashi K."/>
            <person name="Sato H."/>
            <person name="Nagai K."/>
            <person name="Kimura K."/>
            <person name="Makita H."/>
            <person name="Sekine M."/>
            <person name="Obayashi M."/>
            <person name="Nishi T."/>
            <person name="Shibahara T."/>
            <person name="Tanaka T."/>
            <person name="Ishii S."/>
            <person name="Yamamoto J."/>
            <person name="Saito K."/>
            <person name="Kawai Y."/>
            <person name="Isono Y."/>
            <person name="Nakamura Y."/>
            <person name="Nagahari K."/>
            <person name="Murakami K."/>
            <person name="Yasuda T."/>
            <person name="Iwayanagi T."/>
            <person name="Wagatsuma M."/>
            <person name="Shiratori A."/>
            <person name="Sudo H."/>
            <person name="Hosoiri T."/>
            <person name="Kaku Y."/>
            <person name="Kodaira H."/>
            <person name="Kondo H."/>
            <person name="Sugawara M."/>
            <person name="Takahashi M."/>
            <person name="Kanda K."/>
            <person name="Yokoi T."/>
            <person name="Furuya T."/>
            <person name="Kikkawa E."/>
            <person name="Omura Y."/>
            <person name="Abe K."/>
            <person name="Kamihara K."/>
            <person name="Katsuta N."/>
            <person name="Sato K."/>
            <person name="Tanikawa M."/>
            <person name="Yamazaki M."/>
            <person name="Ninomiya K."/>
            <person name="Ishibashi T."/>
            <person name="Yamashita H."/>
            <person name="Murakawa K."/>
            <person name="Fujimori K."/>
            <person name="Tanai H."/>
            <person name="Kimata M."/>
            <person name="Watanabe M."/>
            <person name="Hiraoka S."/>
            <person name="Chiba Y."/>
            <person name="Ishida S."/>
            <person name="Ono Y."/>
            <person name="Takiguchi S."/>
            <person name="Watanabe S."/>
            <person name="Yosida M."/>
            <person name="Hotuta T."/>
            <person name="Kusano J."/>
            <person name="Kanehori K."/>
            <person name="Takahashi-Fujii A."/>
            <person name="Hara H."/>
            <person name="Tanase T.-O."/>
            <person name="Nomura Y."/>
            <person name="Togiya S."/>
            <person name="Komai F."/>
            <person name="Hara R."/>
            <person name="Takeuchi K."/>
            <person name="Arita M."/>
            <person name="Imose N."/>
            <person name="Musashino K."/>
            <person name="Yuuki H."/>
            <person name="Oshima A."/>
            <person name="Sasaki N."/>
            <person name="Aotsuka S."/>
            <person name="Yoshikawa Y."/>
            <person name="Matsunawa H."/>
            <person name="Ichihara T."/>
            <person name="Shiohata N."/>
            <person name="Sano S."/>
            <person name="Moriya S."/>
            <person name="Momiyama H."/>
            <person name="Satoh N."/>
            <person name="Takami S."/>
            <person name="Terashima Y."/>
            <person name="Suzuki O."/>
            <person name="Nakagawa S."/>
            <person name="Senoh A."/>
            <person name="Mizoguchi H."/>
            <person name="Goto Y."/>
            <person name="Shimizu F."/>
            <person name="Wakebe H."/>
            <person name="Hishigaki H."/>
            <person name="Watanabe T."/>
            <person name="Sugiyama A."/>
            <person name="Takemoto M."/>
            <person name="Kawakami B."/>
            <person name="Yamazaki M."/>
            <person name="Watanabe K."/>
            <person name="Kumagai A."/>
            <person name="Itakura S."/>
            <person name="Fukuzumi Y."/>
            <person name="Fujimori Y."/>
            <person name="Komiyama M."/>
            <person name="Tashiro H."/>
            <person name="Tanigami A."/>
            <person name="Fujiwara T."/>
            <person name="Ono T."/>
            <person name="Yamada K."/>
            <person name="Fujii Y."/>
            <person name="Ozaki K."/>
            <person name="Hirao M."/>
            <person name="Ohmori Y."/>
            <person name="Kawabata A."/>
            <person name="Hikiji T."/>
            <person name="Kobatake N."/>
            <person name="Inagaki H."/>
            <person name="Ikema Y."/>
            <person name="Okamoto S."/>
            <person name="Okitani R."/>
            <person name="Kawakami T."/>
            <person name="Noguchi S."/>
            <person name="Itoh T."/>
            <person name="Shigeta K."/>
            <person name="Senba T."/>
            <person name="Matsumura K."/>
            <person name="Nakajima Y."/>
            <person name="Mizuno T."/>
            <person name="Morinaga M."/>
            <person name="Sasaki M."/>
            <person name="Togashi T."/>
            <person name="Oyama M."/>
            <person name="Hata H."/>
            <person name="Watanabe M."/>
            <person name="Komatsu T."/>
            <person name="Mizushima-Sugano J."/>
            <person name="Satoh T."/>
            <person name="Shirai Y."/>
            <person name="Takahashi Y."/>
            <person name="Nakagawa K."/>
            <person name="Okumura K."/>
            <person name="Nagase T."/>
            <person name="Nomura N."/>
            <person name="Kikuchi H."/>
            <person name="Masuho Y."/>
            <person name="Yamashita R."/>
            <person name="Nakai K."/>
            <person name="Yada T."/>
            <person name="Nakamura Y."/>
            <person name="Ohara O."/>
            <person name="Isogai T."/>
            <person name="Sugano S."/>
        </authorList>
    </citation>
    <scope>NUCLEOTIDE SEQUENCE [LARGE SCALE MRNA] (ISOFORM 2)</scope>
    <scope>NUCLEOTIDE SEQUENCE [MRNA] OF 347-936 (ISOFORM 5)</scope>
    <source>
        <tissue>Colon</tissue>
        <tissue>Embryo</tissue>
    </source>
</reference>
<reference key="3">
    <citation type="journal article" date="2007" name="BMC Genomics">
        <title>The full-ORF clone resource of the German cDNA consortium.</title>
        <authorList>
            <person name="Bechtel S."/>
            <person name="Rosenfelder H."/>
            <person name="Duda A."/>
            <person name="Schmidt C.P."/>
            <person name="Ernst U."/>
            <person name="Wellenreuther R."/>
            <person name="Mehrle A."/>
            <person name="Schuster C."/>
            <person name="Bahr A."/>
            <person name="Bloecker H."/>
            <person name="Heubner D."/>
            <person name="Hoerlein A."/>
            <person name="Michel G."/>
            <person name="Wedler H."/>
            <person name="Koehrer K."/>
            <person name="Ottenwaelder B."/>
            <person name="Poustka A."/>
            <person name="Wiemann S."/>
            <person name="Schupp I."/>
        </authorList>
    </citation>
    <scope>NUCLEOTIDE SEQUENCE [LARGE SCALE MRNA] (ISOFORM 3)</scope>
    <source>
        <tissue>Amygdala</tissue>
    </source>
</reference>
<reference key="4">
    <citation type="submission" date="2005-09" db="EMBL/GenBank/DDBJ databases">
        <authorList>
            <person name="Mural R.J."/>
            <person name="Istrail S."/>
            <person name="Sutton G.G."/>
            <person name="Florea L."/>
            <person name="Halpern A.L."/>
            <person name="Mobarry C.M."/>
            <person name="Lippert R."/>
            <person name="Walenz B."/>
            <person name="Shatkay H."/>
            <person name="Dew I."/>
            <person name="Miller J.R."/>
            <person name="Flanigan M.J."/>
            <person name="Edwards N.J."/>
            <person name="Bolanos R."/>
            <person name="Fasulo D."/>
            <person name="Halldorsson B.V."/>
            <person name="Hannenhalli S."/>
            <person name="Turner R."/>
            <person name="Yooseph S."/>
            <person name="Lu F."/>
            <person name="Nusskern D.R."/>
            <person name="Shue B.C."/>
            <person name="Zheng X.H."/>
            <person name="Zhong F."/>
            <person name="Delcher A.L."/>
            <person name="Huson D.H."/>
            <person name="Kravitz S.A."/>
            <person name="Mouchard L."/>
            <person name="Reinert K."/>
            <person name="Remington K.A."/>
            <person name="Clark A.G."/>
            <person name="Waterman M.S."/>
            <person name="Eichler E.E."/>
            <person name="Adams M.D."/>
            <person name="Hunkapiller M.W."/>
            <person name="Myers E.W."/>
            <person name="Venter J.C."/>
        </authorList>
    </citation>
    <scope>NUCLEOTIDE SEQUENCE [LARGE SCALE GENOMIC DNA]</scope>
</reference>
<reference key="5">
    <citation type="journal article" date="2004" name="Genome Res.">
        <title>The status, quality, and expansion of the NIH full-length cDNA project: the Mammalian Gene Collection (MGC).</title>
        <authorList>
            <consortium name="The MGC Project Team"/>
        </authorList>
    </citation>
    <scope>NUCLEOTIDE SEQUENCE [LARGE SCALE MRNA] (ISOFORM 2)</scope>
    <scope>NUCLEOTIDE SEQUENCE [MRNA] OF 724-936 (ISOFORM 4)</scope>
    <source>
        <tissue>Brain</tissue>
        <tissue>Lung</tissue>
    </source>
</reference>
<reference key="6">
    <citation type="journal article" date="2005" name="Mol. Biol. Cell">
        <title>The aftiphilin/p200/gamma-synergin complex.</title>
        <authorList>
            <person name="Hirst J."/>
            <person name="Borner G.H."/>
            <person name="Harbour M."/>
            <person name="Robinson M.S."/>
        </authorList>
    </citation>
    <scope>FUNCTION</scope>
    <scope>SUBUNIT</scope>
    <scope>IDENTIFICATION IN THE AFTIPHILIN-P200-GAMMA-SYNERGIN COMPLEX</scope>
    <scope>INTERACTION WITH HEATR5B; SYNRG; AP1G1; CLTCL1 AND GGA1</scope>
    <scope>SUBCELLULAR LOCATION</scope>
    <scope>MUTAGENESIS OF 716-TYR--TRP-718</scope>
</reference>
<reference key="7">
    <citation type="journal article" date="2006" name="Nat. Biotechnol.">
        <title>A probability-based approach for high-throughput protein phosphorylation analysis and site localization.</title>
        <authorList>
            <person name="Beausoleil S.A."/>
            <person name="Villen J."/>
            <person name="Gerber S.A."/>
            <person name="Rush J."/>
            <person name="Gygi S.P."/>
        </authorList>
    </citation>
    <scope>PHOSPHORYLATION [LARGE SCALE ANALYSIS] AT THR-617</scope>
    <scope>IDENTIFICATION BY MASS SPECTROMETRY [LARGE SCALE ANALYSIS]</scope>
    <source>
        <tissue>Cervix carcinoma</tissue>
    </source>
</reference>
<reference key="8">
    <citation type="journal article" date="2009" name="Sci. Signal.">
        <title>Quantitative phosphoproteomic analysis of T cell receptor signaling reveals system-wide modulation of protein-protein interactions.</title>
        <authorList>
            <person name="Mayya V."/>
            <person name="Lundgren D.H."/>
            <person name="Hwang S.-I."/>
            <person name="Rezaul K."/>
            <person name="Wu L."/>
            <person name="Eng J.K."/>
            <person name="Rodionov V."/>
            <person name="Han D.K."/>
        </authorList>
    </citation>
    <scope>PHOSPHORYLATION [LARGE SCALE ANALYSIS] AT THR-617</scope>
    <scope>IDENTIFICATION BY MASS SPECTROMETRY [LARGE SCALE ANALYSIS]</scope>
    <source>
        <tissue>Leukemic T-cell</tissue>
    </source>
</reference>
<reference key="9">
    <citation type="journal article" date="2010" name="Sci. Signal.">
        <title>Quantitative phosphoproteomics reveals widespread full phosphorylation site occupancy during mitosis.</title>
        <authorList>
            <person name="Olsen J.V."/>
            <person name="Vermeulen M."/>
            <person name="Santamaria A."/>
            <person name="Kumar C."/>
            <person name="Miller M.L."/>
            <person name="Jensen L.J."/>
            <person name="Gnad F."/>
            <person name="Cox J."/>
            <person name="Jensen T.S."/>
            <person name="Nigg E.A."/>
            <person name="Brunak S."/>
            <person name="Mann M."/>
        </authorList>
    </citation>
    <scope>PHOSPHORYLATION [LARGE SCALE ANALYSIS] AT SER-151</scope>
    <scope>IDENTIFICATION BY MASS SPECTROMETRY [LARGE SCALE ANALYSIS]</scope>
    <source>
        <tissue>Cervix carcinoma</tissue>
    </source>
</reference>
<reference key="10">
    <citation type="journal article" date="2011" name="BMC Syst. Biol.">
        <title>Initial characterization of the human central proteome.</title>
        <authorList>
            <person name="Burkard T.R."/>
            <person name="Planyavsky M."/>
            <person name="Kaupe I."/>
            <person name="Breitwieser F.P."/>
            <person name="Buerckstuemmer T."/>
            <person name="Bennett K.L."/>
            <person name="Superti-Furga G."/>
            <person name="Colinge J."/>
        </authorList>
    </citation>
    <scope>IDENTIFICATION BY MASS SPECTROMETRY [LARGE SCALE ANALYSIS]</scope>
</reference>
<reference key="11">
    <citation type="journal article" date="2013" name="J. Proteome Res.">
        <title>Toward a comprehensive characterization of a human cancer cell phosphoproteome.</title>
        <authorList>
            <person name="Zhou H."/>
            <person name="Di Palma S."/>
            <person name="Preisinger C."/>
            <person name="Peng M."/>
            <person name="Polat A.N."/>
            <person name="Heck A.J."/>
            <person name="Mohammed S."/>
        </authorList>
    </citation>
    <scope>PHOSPHORYLATION [LARGE SCALE ANALYSIS] AT SER-151 AND THR-617</scope>
    <scope>IDENTIFICATION BY MASS SPECTROMETRY [LARGE SCALE ANALYSIS]</scope>
    <source>
        <tissue>Cervix carcinoma</tissue>
        <tissue>Erythroleukemia</tissue>
    </source>
</reference>
<reference key="12">
    <citation type="journal article" date="2014" name="J. Proteomics">
        <title>An enzyme assisted RP-RPLC approach for in-depth analysis of human liver phosphoproteome.</title>
        <authorList>
            <person name="Bian Y."/>
            <person name="Song C."/>
            <person name="Cheng K."/>
            <person name="Dong M."/>
            <person name="Wang F."/>
            <person name="Huang J."/>
            <person name="Sun D."/>
            <person name="Wang L."/>
            <person name="Ye M."/>
            <person name="Zou H."/>
        </authorList>
    </citation>
    <scope>PHOSPHORYLATION [LARGE SCALE ANALYSIS] AT SER-518</scope>
    <scope>IDENTIFICATION BY MASS SPECTROMETRY [LARGE SCALE ANALYSIS]</scope>
    <source>
        <tissue>Liver</tissue>
    </source>
</reference>
<comment type="function">
    <text evidence="6">Component of clathrin-coated vesicles (PubMed:15758025). Component of the aftiphilin/p200/gamma-synergin complex, which plays roles in AP1G1/AP-1-mediated protein trafficking including the trafficking of transferrin from early to recycling endosomes, and the membrane trafficking of furin and the lysosomal enzyme cathepsin D between the trans-Golgi network (TGN) and endosomes (PubMed:15758025).</text>
</comment>
<comment type="subunit">
    <text evidence="5 6">Self-associates (PubMed:15758025). Interacts with GGA1 (via GAE domain) (PubMed:14665628, PubMed:15758025). Interacts with GGA3 (via GAE domain), AP1G1 (via GAE domain) and AP1G2 (via GAE domain) (PubMed:14665628). Component of the aftiphilin/p200/gamma-synergin complex, at least composed of AFTPH/aftiphilin, HEATR5B/p200a and SYNRG/gamma-synergin, which plays a role in the AP1G1/AP-1-mediated protein trafficking from early to recycling endosomes (PubMed:15758025). Within the complex interacts with HEATR5B/p200a and SYNRG/gamma-synergin; the interactions are direct (PubMed:15758025). Interacts with AP1G1/AP-1; the interaction is required to recruit AFTPH/aftiphilin to the perinuclear region of the cell (PubMed:15758025). Interacts with CLTCL1/Clathrin (PubMed:15758025).</text>
</comment>
<comment type="interaction">
    <interactant intactId="EBI-2848714">
        <id>Q6ULP2</id>
    </interactant>
    <interactant intactId="EBI-7240490">
        <id>Q9UMZ2</id>
        <label>SYNRG</label>
    </interactant>
    <organismsDiffer>false</organismsDiffer>
    <experiments>2</experiments>
</comment>
<comment type="subcellular location">
    <subcellularLocation>
        <location evidence="5 6">Cytoplasm</location>
    </subcellularLocation>
    <subcellularLocation>
        <location evidence="6">Cytoplasm</location>
        <location evidence="6">Perinuclear region</location>
    </subcellularLocation>
    <subcellularLocation>
        <location evidence="6">Cytoplasmic vesicle</location>
        <location evidence="6">Clathrin-coated vesicle</location>
    </subcellularLocation>
    <text evidence="5 6">Co-localizes with AP1G1/AP-1 in the cytoplasm (PubMed:14665628, PubMed:15758025). Recruited to the perinuclear region by AP1G1/AP-1 (PubMed:15758025).</text>
</comment>
<comment type="alternative products">
    <event type="alternative splicing"/>
    <isoform>
        <id>Q6ULP2-1</id>
        <name>1</name>
        <sequence type="displayed"/>
    </isoform>
    <isoform>
        <id>Q6ULP2-6</id>
        <name>2</name>
        <sequence type="described" ref="VSP_059492 VSP_059495"/>
    </isoform>
    <isoform>
        <id>Q6ULP2-7</id>
        <name>3</name>
        <sequence type="described" ref="VSP_059493 VSP_059494"/>
    </isoform>
    <isoform>
        <id>Q6ULP2-8</id>
        <name>4</name>
        <sequence type="described" ref="VSP_059492"/>
    </isoform>
    <isoform>
        <id>Q6ULP2-9</id>
        <name>5</name>
        <sequence type="described" ref="VSP_059495"/>
    </isoform>
</comment>
<comment type="domain">
    <text evidence="1">The WXXF motifs mediate binding of accessory proteins to the ear-domain of AP-1, GGAs and AP-2 through hydrophobic interactions. Selective binding to the GAE domains of AP-1 or to the alpha-ear domain of AP-2 is tuned by the acidic context surrounding the motif and the properties of the second residue of the motif itself (By similarity).</text>
</comment>
<comment type="miscellaneous">
    <molecule>Isoform 3</molecule>
    <text evidence="10">May be due to intron retention.</text>
</comment>
<comment type="sequence caution" evidence="10">
    <conflict type="erroneous initiation">
        <sequence resource="EMBL-CDS" id="AAH22247"/>
    </conflict>
    <text>Truncated N-terminus.</text>
</comment>
<comment type="sequence caution" evidence="10">
    <conflict type="frameshift">
        <sequence resource="EMBL-CDS" id="AAH22247"/>
    </conflict>
</comment>
<comment type="sequence caution" evidence="10">
    <conflict type="erroneous initiation">
        <sequence resource="EMBL-CDS" id="BAB13930"/>
    </conflict>
    <text>Truncated N-terminus.</text>
</comment>
<comment type="sequence caution" evidence="10">
    <conflict type="erroneous initiation">
        <sequence resource="EMBL-CDS" id="BAB14949"/>
    </conflict>
    <text>Truncated N-terminus.</text>
</comment>
<feature type="chain" id="PRO_0000064488" description="Aftiphilin">
    <location>
        <begin position="1"/>
        <end position="936"/>
    </location>
</feature>
<feature type="region of interest" description="Interaction with AP1G1, AP1G2, GGA1 and GGA3" evidence="5">
    <location>
        <begin position="1"/>
        <end position="523"/>
    </location>
</feature>
<feature type="region of interest" description="Disordered" evidence="4">
    <location>
        <begin position="1"/>
        <end position="36"/>
    </location>
</feature>
<feature type="region of interest" description="Disordered" evidence="4">
    <location>
        <begin position="197"/>
        <end position="216"/>
    </location>
</feature>
<feature type="region of interest" description="Disordered" evidence="4">
    <location>
        <begin position="374"/>
        <end position="409"/>
    </location>
</feature>
<feature type="region of interest" description="Interaction with AP1G1" evidence="6">
    <location>
        <begin position="386"/>
        <end position="610"/>
    </location>
</feature>
<feature type="region of interest" description="Disordered" evidence="4">
    <location>
        <begin position="589"/>
        <end position="637"/>
    </location>
</feature>
<feature type="region of interest" description="Clathrin-binding" evidence="3">
    <location>
        <begin position="825"/>
        <end position="829"/>
    </location>
</feature>
<feature type="short sequence motif" description="WXXF motif 1">
    <location>
        <begin position="28"/>
        <end position="31"/>
    </location>
</feature>
<feature type="short sequence motif" description="WXXF motif 2">
    <location>
        <begin position="432"/>
        <end position="435"/>
    </location>
</feature>
<feature type="short sequence motif" description="WXXF motif 3 (partial)">
    <location>
        <begin position="436"/>
        <end position="438"/>
    </location>
</feature>
<feature type="short sequence motif" description="WXXF motif 4">
    <location>
        <begin position="478"/>
        <end position="481"/>
    </location>
</feature>
<feature type="short sequence motif" description="CLTCL1/Clathrin-binding" evidence="6">
    <location>
        <begin position="716"/>
        <end position="718"/>
    </location>
</feature>
<feature type="compositionally biased region" description="Acidic residues" evidence="4">
    <location>
        <begin position="19"/>
        <end position="29"/>
    </location>
</feature>
<feature type="compositionally biased region" description="Basic and acidic residues" evidence="4">
    <location>
        <begin position="374"/>
        <end position="389"/>
    </location>
</feature>
<feature type="compositionally biased region" description="Basic and acidic residues" evidence="4">
    <location>
        <begin position="595"/>
        <end position="610"/>
    </location>
</feature>
<feature type="compositionally biased region" description="Polar residues" evidence="4">
    <location>
        <begin position="617"/>
        <end position="628"/>
    </location>
</feature>
<feature type="modified residue" description="Phosphoserine" evidence="13 14">
    <location>
        <position position="151"/>
    </location>
</feature>
<feature type="modified residue" description="Phosphoserine" evidence="2">
    <location>
        <position position="395"/>
    </location>
</feature>
<feature type="modified residue" description="Phosphoserine" evidence="15">
    <location>
        <position position="518"/>
    </location>
</feature>
<feature type="modified residue" description="Phosphothreonine" evidence="11 12 14">
    <location>
        <position position="617"/>
    </location>
</feature>
<feature type="splice variant" id="VSP_059492" description="In isoform 2 and isoform 4." evidence="7 8">
    <location>
        <begin position="819"/>
        <end position="846"/>
    </location>
</feature>
<feature type="splice variant" id="VSP_059493" description="In isoform 3." evidence="9">
    <original>AS</original>
    <variation>GT</variation>
    <location>
        <begin position="819"/>
        <end position="820"/>
    </location>
</feature>
<feature type="splice variant" id="VSP_059494" description="In isoform 3." evidence="9">
    <location>
        <begin position="821"/>
        <end position="936"/>
    </location>
</feature>
<feature type="splice variant" id="VSP_059495" description="In isoform 2 and isoform 5." evidence="7 8">
    <original>T</original>
    <variation>TS</variation>
    <location>
        <position position="887"/>
    </location>
</feature>
<feature type="sequence variant" id="VAR_056728" description="In dbSNP:rs35986567.">
    <original>D</original>
    <variation>G</variation>
    <location>
        <position position="233"/>
    </location>
</feature>
<feature type="sequence variant" id="VAR_056729" description="In dbSNP:rs3770740.">
    <original>E</original>
    <variation>K</variation>
    <location>
        <position position="301"/>
    </location>
</feature>
<feature type="sequence variant" id="VAR_056730" description="In dbSNP:rs3770739.">
    <original>N</original>
    <variation>S</variation>
    <location>
        <position position="550"/>
    </location>
</feature>
<feature type="mutagenesis site" description="Abolishes the interaction with CLTCL1/Clathrin." evidence="6">
    <original>YQW</original>
    <variation>SQS</variation>
    <location>
        <begin position="716"/>
        <end position="718"/>
    </location>
</feature>
<feature type="sequence conflict" description="In Ref. 2; BAB14949." evidence="10" ref="2">
    <original>L</original>
    <variation>Q</variation>
    <location>
        <position position="705"/>
    </location>
</feature>
<feature type="sequence conflict" description="In Ref. 2; BAB13930." evidence="10" ref="2">
    <original>D</original>
    <variation>G</variation>
    <location>
        <position position="734"/>
    </location>
</feature>
<feature type="sequence conflict" description="In Ref. 1; AAR14726." evidence="10" ref="1">
    <original>P</original>
    <variation>L</variation>
    <location>
        <position position="850"/>
    </location>
</feature>
<feature type="sequence conflict" description="In Ref. 5; AAH22247." evidence="10" ref="5">
    <original>E</original>
    <variation>G</variation>
    <location>
        <position position="894"/>
    </location>
</feature>
<feature type="sequence conflict" description="In Ref. 5; AAH47529." evidence="10" ref="5">
    <original>I</original>
    <variation>V</variation>
    <location>
        <position position="904"/>
    </location>
</feature>
<protein>
    <recommendedName>
        <fullName>Aftiphilin</fullName>
    </recommendedName>
</protein>
<proteinExistence type="evidence at protein level"/>